<protein>
    <recommendedName>
        <fullName evidence="1">Large ribosomal subunit protein uL5</fullName>
    </recommendedName>
    <alternativeName>
        <fullName evidence="2">50S ribosomal protein L5</fullName>
    </alternativeName>
</protein>
<accession>A2C4Y7</accession>
<reference key="1">
    <citation type="journal article" date="2007" name="PLoS Genet.">
        <title>Patterns and implications of gene gain and loss in the evolution of Prochlorococcus.</title>
        <authorList>
            <person name="Kettler G.C."/>
            <person name="Martiny A.C."/>
            <person name="Huang K."/>
            <person name="Zucker J."/>
            <person name="Coleman M.L."/>
            <person name="Rodrigue S."/>
            <person name="Chen F."/>
            <person name="Lapidus A."/>
            <person name="Ferriera S."/>
            <person name="Johnson J."/>
            <person name="Steglich C."/>
            <person name="Church G.M."/>
            <person name="Richardson P."/>
            <person name="Chisholm S.W."/>
        </authorList>
    </citation>
    <scope>NUCLEOTIDE SEQUENCE [LARGE SCALE GENOMIC DNA]</scope>
    <source>
        <strain>NATL1A</strain>
    </source>
</reference>
<keyword id="KW-0687">Ribonucleoprotein</keyword>
<keyword id="KW-0689">Ribosomal protein</keyword>
<keyword id="KW-0694">RNA-binding</keyword>
<keyword id="KW-0699">rRNA-binding</keyword>
<keyword id="KW-0820">tRNA-binding</keyword>
<dbReference type="EMBL" id="CP000553">
    <property type="protein sequence ID" value="ABM76547.1"/>
    <property type="molecule type" value="Genomic_DNA"/>
</dbReference>
<dbReference type="RefSeq" id="WP_011824508.1">
    <property type="nucleotide sequence ID" value="NC_008819.1"/>
</dbReference>
<dbReference type="SMR" id="A2C4Y7"/>
<dbReference type="KEGG" id="pme:NATL1_19911"/>
<dbReference type="eggNOG" id="COG0094">
    <property type="taxonomic scope" value="Bacteria"/>
</dbReference>
<dbReference type="HOGENOM" id="CLU_061015_2_1_3"/>
<dbReference type="Proteomes" id="UP000002592">
    <property type="component" value="Chromosome"/>
</dbReference>
<dbReference type="GO" id="GO:1990904">
    <property type="term" value="C:ribonucleoprotein complex"/>
    <property type="evidence" value="ECO:0007669"/>
    <property type="project" value="UniProtKB-KW"/>
</dbReference>
<dbReference type="GO" id="GO:0005840">
    <property type="term" value="C:ribosome"/>
    <property type="evidence" value="ECO:0007669"/>
    <property type="project" value="UniProtKB-KW"/>
</dbReference>
<dbReference type="GO" id="GO:0019843">
    <property type="term" value="F:rRNA binding"/>
    <property type="evidence" value="ECO:0007669"/>
    <property type="project" value="UniProtKB-UniRule"/>
</dbReference>
<dbReference type="GO" id="GO:0003735">
    <property type="term" value="F:structural constituent of ribosome"/>
    <property type="evidence" value="ECO:0007669"/>
    <property type="project" value="InterPro"/>
</dbReference>
<dbReference type="GO" id="GO:0000049">
    <property type="term" value="F:tRNA binding"/>
    <property type="evidence" value="ECO:0007669"/>
    <property type="project" value="UniProtKB-UniRule"/>
</dbReference>
<dbReference type="GO" id="GO:0006412">
    <property type="term" value="P:translation"/>
    <property type="evidence" value="ECO:0007669"/>
    <property type="project" value="UniProtKB-UniRule"/>
</dbReference>
<dbReference type="FunFam" id="3.30.1440.10:FF:000001">
    <property type="entry name" value="50S ribosomal protein L5"/>
    <property type="match status" value="1"/>
</dbReference>
<dbReference type="Gene3D" id="3.30.1440.10">
    <property type="match status" value="1"/>
</dbReference>
<dbReference type="HAMAP" id="MF_01333_B">
    <property type="entry name" value="Ribosomal_uL5_B"/>
    <property type="match status" value="1"/>
</dbReference>
<dbReference type="InterPro" id="IPR002132">
    <property type="entry name" value="Ribosomal_uL5"/>
</dbReference>
<dbReference type="InterPro" id="IPR020930">
    <property type="entry name" value="Ribosomal_uL5_bac-type"/>
</dbReference>
<dbReference type="InterPro" id="IPR031309">
    <property type="entry name" value="Ribosomal_uL5_C"/>
</dbReference>
<dbReference type="InterPro" id="IPR020929">
    <property type="entry name" value="Ribosomal_uL5_CS"/>
</dbReference>
<dbReference type="InterPro" id="IPR022803">
    <property type="entry name" value="Ribosomal_uL5_dom_sf"/>
</dbReference>
<dbReference type="InterPro" id="IPR031310">
    <property type="entry name" value="Ribosomal_uL5_N"/>
</dbReference>
<dbReference type="NCBIfam" id="NF000585">
    <property type="entry name" value="PRK00010.1"/>
    <property type="match status" value="1"/>
</dbReference>
<dbReference type="PANTHER" id="PTHR11994">
    <property type="entry name" value="60S RIBOSOMAL PROTEIN L11-RELATED"/>
    <property type="match status" value="1"/>
</dbReference>
<dbReference type="Pfam" id="PF00281">
    <property type="entry name" value="Ribosomal_L5"/>
    <property type="match status" value="1"/>
</dbReference>
<dbReference type="Pfam" id="PF00673">
    <property type="entry name" value="Ribosomal_L5_C"/>
    <property type="match status" value="1"/>
</dbReference>
<dbReference type="PIRSF" id="PIRSF002161">
    <property type="entry name" value="Ribosomal_L5"/>
    <property type="match status" value="1"/>
</dbReference>
<dbReference type="SUPFAM" id="SSF55282">
    <property type="entry name" value="RL5-like"/>
    <property type="match status" value="1"/>
</dbReference>
<dbReference type="PROSITE" id="PS00358">
    <property type="entry name" value="RIBOSOMAL_L5"/>
    <property type="match status" value="1"/>
</dbReference>
<evidence type="ECO:0000255" key="1">
    <source>
        <dbReference type="HAMAP-Rule" id="MF_01333"/>
    </source>
</evidence>
<evidence type="ECO:0000305" key="2"/>
<sequence>MSLKTRYRETIRPKLLKDLGLKNVHQVPKVQKVTLNRGLGEAATNSKALEASLKEMATISGQKALVTRAKKAIATFKIRQGMPIGCSVTLRGDRMYAFLERFINLALPRIRDFRGVSPKSFDGRGNYTIGVKEQLIFPEITFDKVDTIRGMDITIVTSASSDEQGKALLSEMGMPFRKK</sequence>
<organism>
    <name type="scientific">Prochlorococcus marinus (strain NATL1A)</name>
    <dbReference type="NCBI Taxonomy" id="167555"/>
    <lineage>
        <taxon>Bacteria</taxon>
        <taxon>Bacillati</taxon>
        <taxon>Cyanobacteriota</taxon>
        <taxon>Cyanophyceae</taxon>
        <taxon>Synechococcales</taxon>
        <taxon>Prochlorococcaceae</taxon>
        <taxon>Prochlorococcus</taxon>
    </lineage>
</organism>
<proteinExistence type="inferred from homology"/>
<feature type="chain" id="PRO_1000052794" description="Large ribosomal subunit protein uL5">
    <location>
        <begin position="1"/>
        <end position="179"/>
    </location>
</feature>
<comment type="function">
    <text evidence="1">This is one of the proteins that bind and probably mediate the attachment of the 5S RNA into the large ribosomal subunit, where it forms part of the central protuberance. In the 70S ribosome it contacts protein S13 of the 30S subunit (bridge B1b), connecting the 2 subunits; this bridge is implicated in subunit movement. Contacts the P site tRNA; the 5S rRNA and some of its associated proteins might help stabilize positioning of ribosome-bound tRNAs.</text>
</comment>
<comment type="subunit">
    <text evidence="1">Part of the 50S ribosomal subunit; part of the 5S rRNA/L5/L18/L25 subcomplex. Contacts the 5S rRNA and the P site tRNA. Forms a bridge to the 30S subunit in the 70S ribosome.</text>
</comment>
<comment type="similarity">
    <text evidence="1">Belongs to the universal ribosomal protein uL5 family.</text>
</comment>
<name>RL5_PROM1</name>
<gene>
    <name evidence="1" type="primary">rplE</name>
    <name evidence="1" type="synonym">rpl5</name>
    <name type="ordered locus">NATL1_19911</name>
</gene>